<protein>
    <recommendedName>
        <fullName evidence="1">Iron-sulfur cluster repair protein YtfE</fullName>
    </recommendedName>
</protein>
<keyword id="KW-0963">Cytoplasm</keyword>
<keyword id="KW-0408">Iron</keyword>
<keyword id="KW-0479">Metal-binding</keyword>
<keyword id="KW-0346">Stress response</keyword>
<gene>
    <name evidence="1" type="primary">ytfE</name>
    <name type="ordered locus">YPA_0081</name>
</gene>
<dbReference type="EMBL" id="CP000308">
    <property type="protein sequence ID" value="ABG12050.1"/>
    <property type="molecule type" value="Genomic_DNA"/>
</dbReference>
<dbReference type="RefSeq" id="WP_002210159.1">
    <property type="nucleotide sequence ID" value="NZ_CP009906.1"/>
</dbReference>
<dbReference type="SMR" id="Q1CBX2"/>
<dbReference type="GeneID" id="57975183"/>
<dbReference type="KEGG" id="ypa:YPA_0081"/>
<dbReference type="Proteomes" id="UP000001971">
    <property type="component" value="Chromosome"/>
</dbReference>
<dbReference type="GO" id="GO:0005737">
    <property type="term" value="C:cytoplasm"/>
    <property type="evidence" value="ECO:0007669"/>
    <property type="project" value="UniProtKB-SubCell"/>
</dbReference>
<dbReference type="GO" id="GO:0046872">
    <property type="term" value="F:metal ion binding"/>
    <property type="evidence" value="ECO:0007669"/>
    <property type="project" value="UniProtKB-KW"/>
</dbReference>
<dbReference type="GO" id="GO:0030091">
    <property type="term" value="P:protein repair"/>
    <property type="evidence" value="ECO:0007669"/>
    <property type="project" value="UniProtKB-UniRule"/>
</dbReference>
<dbReference type="GO" id="GO:0051409">
    <property type="term" value="P:response to nitrosative stress"/>
    <property type="evidence" value="ECO:0007669"/>
    <property type="project" value="UniProtKB-UniRule"/>
</dbReference>
<dbReference type="GO" id="GO:0006979">
    <property type="term" value="P:response to oxidative stress"/>
    <property type="evidence" value="ECO:0007669"/>
    <property type="project" value="UniProtKB-UniRule"/>
</dbReference>
<dbReference type="CDD" id="cd12108">
    <property type="entry name" value="Hr-like"/>
    <property type="match status" value="1"/>
</dbReference>
<dbReference type="Gene3D" id="1.20.120.520">
    <property type="entry name" value="nmb1532 protein domain like"/>
    <property type="match status" value="1"/>
</dbReference>
<dbReference type="HAMAP" id="MF_01606">
    <property type="entry name" value="RIC_YtfE"/>
    <property type="match status" value="1"/>
</dbReference>
<dbReference type="InterPro" id="IPR023742">
    <property type="entry name" value="FeS-repair_YftE"/>
</dbReference>
<dbReference type="InterPro" id="IPR012312">
    <property type="entry name" value="Hemerythrin-like"/>
</dbReference>
<dbReference type="InterPro" id="IPR019903">
    <property type="entry name" value="RIC_family"/>
</dbReference>
<dbReference type="NCBIfam" id="TIGR03652">
    <property type="entry name" value="FeS_repair_RIC"/>
    <property type="match status" value="1"/>
</dbReference>
<dbReference type="NCBIfam" id="NF008221">
    <property type="entry name" value="PRK10992.1"/>
    <property type="match status" value="1"/>
</dbReference>
<dbReference type="PANTHER" id="PTHR36438">
    <property type="entry name" value="IRON-SULFUR CLUSTER REPAIR PROTEIN YTFE"/>
    <property type="match status" value="1"/>
</dbReference>
<dbReference type="PANTHER" id="PTHR36438:SF1">
    <property type="entry name" value="IRON-SULFUR CLUSTER REPAIR PROTEIN YTFE"/>
    <property type="match status" value="1"/>
</dbReference>
<dbReference type="Pfam" id="PF01814">
    <property type="entry name" value="Hemerythrin"/>
    <property type="match status" value="1"/>
</dbReference>
<dbReference type="Pfam" id="PF04405">
    <property type="entry name" value="ScdA_N"/>
    <property type="match status" value="1"/>
</dbReference>
<feature type="chain" id="PRO_0000291704" description="Iron-sulfur cluster repair protein YtfE">
    <location>
        <begin position="1"/>
        <end position="221"/>
    </location>
</feature>
<reference key="1">
    <citation type="journal article" date="2006" name="J. Bacteriol.">
        <title>Complete genome sequence of Yersinia pestis strains Antiqua and Nepal516: evidence of gene reduction in an emerging pathogen.</title>
        <authorList>
            <person name="Chain P.S.G."/>
            <person name="Hu P."/>
            <person name="Malfatti S.A."/>
            <person name="Radnedge L."/>
            <person name="Larimer F."/>
            <person name="Vergez L.M."/>
            <person name="Worsham P."/>
            <person name="Chu M.C."/>
            <person name="Andersen G.L."/>
        </authorList>
    </citation>
    <scope>NUCLEOTIDE SEQUENCE [LARGE SCALE GENOMIC DNA]</scope>
    <source>
        <strain>Antiqua</strain>
    </source>
</reference>
<proteinExistence type="inferred from homology"/>
<accession>Q1CBX2</accession>
<sequence length="221" mass="25063">MDYRNQSLGALAIAIPRATKLFRQHQLDFCCGGKQTLLRAANKLNLDIDALEAQLSALQTEPHSSEDWQQQPLTNLISFIISRYHDRHREQLPELVLMAEKVERVHGEKPTCPRGLAAELSAILEELTQHMYKEEQILFPMIQRGMGSQASGPIFVMEAEHDAVGQQLDVVKQLTQNVTPPEGACNTWRALYTGINEFITDLMEHIHLENNLLFPRALRGE</sequence>
<evidence type="ECO:0000255" key="1">
    <source>
        <dbReference type="HAMAP-Rule" id="MF_01606"/>
    </source>
</evidence>
<name>YTFE_YERPA</name>
<organism>
    <name type="scientific">Yersinia pestis bv. Antiqua (strain Antiqua)</name>
    <dbReference type="NCBI Taxonomy" id="360102"/>
    <lineage>
        <taxon>Bacteria</taxon>
        <taxon>Pseudomonadati</taxon>
        <taxon>Pseudomonadota</taxon>
        <taxon>Gammaproteobacteria</taxon>
        <taxon>Enterobacterales</taxon>
        <taxon>Yersiniaceae</taxon>
        <taxon>Yersinia</taxon>
    </lineage>
</organism>
<comment type="function">
    <text evidence="1">Di-iron-containing protein involved in the repair of iron-sulfur clusters damaged by oxidative and nitrosative stress conditions.</text>
</comment>
<comment type="subunit">
    <text evidence="1">Homodimer.</text>
</comment>
<comment type="subcellular location">
    <subcellularLocation>
        <location evidence="1">Cytoplasm</location>
    </subcellularLocation>
</comment>
<comment type="similarity">
    <text evidence="1">Belongs to the RIC family. YtfE subfamily.</text>
</comment>